<accession>Q8XNI1</accession>
<gene>
    <name evidence="1" type="primary">uvrC</name>
    <name type="ordered locus">CPE0352</name>
</gene>
<dbReference type="EMBL" id="BA000016">
    <property type="protein sequence ID" value="BAB80058.1"/>
    <property type="molecule type" value="Genomic_DNA"/>
</dbReference>
<dbReference type="RefSeq" id="WP_011009760.1">
    <property type="nucleotide sequence ID" value="NC_003366.1"/>
</dbReference>
<dbReference type="SMR" id="Q8XNI1"/>
<dbReference type="STRING" id="195102.gene:10489608"/>
<dbReference type="KEGG" id="cpe:CPE0352"/>
<dbReference type="HOGENOM" id="CLU_014841_3_2_9"/>
<dbReference type="Proteomes" id="UP000000818">
    <property type="component" value="Chromosome"/>
</dbReference>
<dbReference type="GO" id="GO:0005737">
    <property type="term" value="C:cytoplasm"/>
    <property type="evidence" value="ECO:0007669"/>
    <property type="project" value="UniProtKB-SubCell"/>
</dbReference>
<dbReference type="GO" id="GO:0009380">
    <property type="term" value="C:excinuclease repair complex"/>
    <property type="evidence" value="ECO:0007669"/>
    <property type="project" value="InterPro"/>
</dbReference>
<dbReference type="GO" id="GO:0003677">
    <property type="term" value="F:DNA binding"/>
    <property type="evidence" value="ECO:0007669"/>
    <property type="project" value="UniProtKB-UniRule"/>
</dbReference>
<dbReference type="GO" id="GO:0009381">
    <property type="term" value="F:excinuclease ABC activity"/>
    <property type="evidence" value="ECO:0007669"/>
    <property type="project" value="UniProtKB-UniRule"/>
</dbReference>
<dbReference type="GO" id="GO:0006289">
    <property type="term" value="P:nucleotide-excision repair"/>
    <property type="evidence" value="ECO:0007669"/>
    <property type="project" value="UniProtKB-UniRule"/>
</dbReference>
<dbReference type="GO" id="GO:0009432">
    <property type="term" value="P:SOS response"/>
    <property type="evidence" value="ECO:0007669"/>
    <property type="project" value="UniProtKB-UniRule"/>
</dbReference>
<dbReference type="CDD" id="cd10434">
    <property type="entry name" value="GIY-YIG_UvrC_Cho"/>
    <property type="match status" value="1"/>
</dbReference>
<dbReference type="FunFam" id="3.40.1440.10:FF:000001">
    <property type="entry name" value="UvrABC system protein C"/>
    <property type="match status" value="1"/>
</dbReference>
<dbReference type="Gene3D" id="1.10.150.20">
    <property type="entry name" value="5' to 3' exonuclease, C-terminal subdomain"/>
    <property type="match status" value="1"/>
</dbReference>
<dbReference type="Gene3D" id="3.40.1440.10">
    <property type="entry name" value="GIY-YIG endonuclease"/>
    <property type="match status" value="1"/>
</dbReference>
<dbReference type="Gene3D" id="4.10.860.10">
    <property type="entry name" value="UVR domain"/>
    <property type="match status" value="1"/>
</dbReference>
<dbReference type="Gene3D" id="3.30.420.340">
    <property type="entry name" value="UvrC, RNAse H endonuclease domain"/>
    <property type="match status" value="1"/>
</dbReference>
<dbReference type="HAMAP" id="MF_00203">
    <property type="entry name" value="UvrC"/>
    <property type="match status" value="1"/>
</dbReference>
<dbReference type="InterPro" id="IPR041663">
    <property type="entry name" value="DisA/LigA_HHH"/>
</dbReference>
<dbReference type="InterPro" id="IPR000305">
    <property type="entry name" value="GIY-YIG_endonuc"/>
</dbReference>
<dbReference type="InterPro" id="IPR035901">
    <property type="entry name" value="GIY-YIG_endonuc_sf"/>
</dbReference>
<dbReference type="InterPro" id="IPR047296">
    <property type="entry name" value="GIY-YIG_UvrC_Cho"/>
</dbReference>
<dbReference type="InterPro" id="IPR010994">
    <property type="entry name" value="RuvA_2-like"/>
</dbReference>
<dbReference type="InterPro" id="IPR001943">
    <property type="entry name" value="UVR_dom"/>
</dbReference>
<dbReference type="InterPro" id="IPR036876">
    <property type="entry name" value="UVR_dom_sf"/>
</dbReference>
<dbReference type="InterPro" id="IPR050066">
    <property type="entry name" value="UvrABC_protein_C"/>
</dbReference>
<dbReference type="InterPro" id="IPR004791">
    <property type="entry name" value="UvrC"/>
</dbReference>
<dbReference type="InterPro" id="IPR001162">
    <property type="entry name" value="UvrC_RNase_H_dom"/>
</dbReference>
<dbReference type="InterPro" id="IPR038476">
    <property type="entry name" value="UvrC_RNase_H_dom_sf"/>
</dbReference>
<dbReference type="NCBIfam" id="NF001824">
    <property type="entry name" value="PRK00558.1-5"/>
    <property type="match status" value="1"/>
</dbReference>
<dbReference type="NCBIfam" id="TIGR00194">
    <property type="entry name" value="uvrC"/>
    <property type="match status" value="1"/>
</dbReference>
<dbReference type="PANTHER" id="PTHR30562:SF1">
    <property type="entry name" value="UVRABC SYSTEM PROTEIN C"/>
    <property type="match status" value="1"/>
</dbReference>
<dbReference type="PANTHER" id="PTHR30562">
    <property type="entry name" value="UVRC/OXIDOREDUCTASE"/>
    <property type="match status" value="1"/>
</dbReference>
<dbReference type="Pfam" id="PF01541">
    <property type="entry name" value="GIY-YIG"/>
    <property type="match status" value="1"/>
</dbReference>
<dbReference type="Pfam" id="PF12826">
    <property type="entry name" value="HHH_2"/>
    <property type="match status" value="1"/>
</dbReference>
<dbReference type="Pfam" id="PF02151">
    <property type="entry name" value="UVR"/>
    <property type="match status" value="1"/>
</dbReference>
<dbReference type="Pfam" id="PF22920">
    <property type="entry name" value="UvrC_RNaseH"/>
    <property type="match status" value="1"/>
</dbReference>
<dbReference type="Pfam" id="PF08459">
    <property type="entry name" value="UvrC_RNaseH_dom"/>
    <property type="match status" value="1"/>
</dbReference>
<dbReference type="SMART" id="SM00465">
    <property type="entry name" value="GIYc"/>
    <property type="match status" value="1"/>
</dbReference>
<dbReference type="SUPFAM" id="SSF46600">
    <property type="entry name" value="C-terminal UvrC-binding domain of UvrB"/>
    <property type="match status" value="1"/>
</dbReference>
<dbReference type="SUPFAM" id="SSF82771">
    <property type="entry name" value="GIY-YIG endonuclease"/>
    <property type="match status" value="1"/>
</dbReference>
<dbReference type="SUPFAM" id="SSF47781">
    <property type="entry name" value="RuvA domain 2-like"/>
    <property type="match status" value="1"/>
</dbReference>
<dbReference type="PROSITE" id="PS50164">
    <property type="entry name" value="GIY_YIG"/>
    <property type="match status" value="1"/>
</dbReference>
<dbReference type="PROSITE" id="PS50151">
    <property type="entry name" value="UVR"/>
    <property type="match status" value="1"/>
</dbReference>
<dbReference type="PROSITE" id="PS50165">
    <property type="entry name" value="UVRC"/>
    <property type="match status" value="1"/>
</dbReference>
<comment type="function">
    <text evidence="1">The UvrABC repair system catalyzes the recognition and processing of DNA lesions. UvrC both incises the 5' and 3' sides of the lesion. The N-terminal half is responsible for the 3' incision and the C-terminal half is responsible for the 5' incision.</text>
</comment>
<comment type="subunit">
    <text evidence="1">Interacts with UvrB in an incision complex.</text>
</comment>
<comment type="subcellular location">
    <subcellularLocation>
        <location evidence="1">Cytoplasm</location>
    </subcellularLocation>
</comment>
<comment type="similarity">
    <text evidence="1">Belongs to the UvrC family.</text>
</comment>
<name>UVRC_CLOPE</name>
<sequence length="620" mass="71391">MFDFQHQLKILPDKPGVYIMKNSLGEVIYVGKAKVLKNRVRQYFQNSKNHSEKVRAMVKNIAEFEYIVTDSEMEALILECNLIKKYSPRYNIALKDDKFYPFIKITTNEDFPRVYVTRNFAKDGNRYFGPYTNGTAVYEVMGLIKKLFPLRTCKKAIVEGGEPTRACLNYHINLCKAPCAGYISKAEYWEMIDEIINILNGTDTSIIKKLKLEMEKAAEELEFEKAAKIRDRILAIELISEKQKMFTVKEGDEDFIDLYTDEKDGCAQVFFVREGKVTGREHFMIENIGDDPVKEVISSFIASFYGGTAQIPKTIYVPEEIEDQELIEKFLTEKRGSKVWIKVPKKGDKKNLLDMVRNNAKIMLDQFKEKMVEEKELNKSALTELADVLGLDSLPVRIEAYDISNIQGVDSVGTMVVFENGKAKNSDYRRFKIKSVKGPNDYESMREILSRRFSHGLEEVNKIKERNLEYSNGKFCIFPDLIMMDGGKGQVNIALEVLKGFGIEIPVCGLVKDHKHRTRGIILNNEEILIRRGSGLMNLITRVQDEVHRYAITYHRSLRDKRTLHSILEDIPRIGEKRRRNLLMKFGSIDNIKKASMEELLDTPGIDKRAAESIKQYFSS</sequence>
<protein>
    <recommendedName>
        <fullName evidence="1">UvrABC system protein C</fullName>
        <shortName evidence="1">Protein UvrC</shortName>
    </recommendedName>
    <alternativeName>
        <fullName evidence="1">Excinuclease ABC subunit C</fullName>
    </alternativeName>
</protein>
<feature type="chain" id="PRO_0000138298" description="UvrABC system protein C">
    <location>
        <begin position="1"/>
        <end position="620"/>
    </location>
</feature>
<feature type="domain" description="GIY-YIG" evidence="1">
    <location>
        <begin position="13"/>
        <end position="92"/>
    </location>
</feature>
<feature type="domain" description="UVR" evidence="1">
    <location>
        <begin position="204"/>
        <end position="239"/>
    </location>
</feature>
<keyword id="KW-0963">Cytoplasm</keyword>
<keyword id="KW-0227">DNA damage</keyword>
<keyword id="KW-0228">DNA excision</keyword>
<keyword id="KW-0234">DNA repair</keyword>
<keyword id="KW-0267">Excision nuclease</keyword>
<keyword id="KW-1185">Reference proteome</keyword>
<keyword id="KW-0742">SOS response</keyword>
<organism>
    <name type="scientific">Clostridium perfringens (strain 13 / Type A)</name>
    <dbReference type="NCBI Taxonomy" id="195102"/>
    <lineage>
        <taxon>Bacteria</taxon>
        <taxon>Bacillati</taxon>
        <taxon>Bacillota</taxon>
        <taxon>Clostridia</taxon>
        <taxon>Eubacteriales</taxon>
        <taxon>Clostridiaceae</taxon>
        <taxon>Clostridium</taxon>
    </lineage>
</organism>
<evidence type="ECO:0000255" key="1">
    <source>
        <dbReference type="HAMAP-Rule" id="MF_00203"/>
    </source>
</evidence>
<reference key="1">
    <citation type="journal article" date="2002" name="Proc. Natl. Acad. Sci. U.S.A.">
        <title>Complete genome sequence of Clostridium perfringens, an anaerobic flesh-eater.</title>
        <authorList>
            <person name="Shimizu T."/>
            <person name="Ohtani K."/>
            <person name="Hirakawa H."/>
            <person name="Ohshima K."/>
            <person name="Yamashita A."/>
            <person name="Shiba T."/>
            <person name="Ogasawara N."/>
            <person name="Hattori M."/>
            <person name="Kuhara S."/>
            <person name="Hayashi H."/>
        </authorList>
    </citation>
    <scope>NUCLEOTIDE SEQUENCE [LARGE SCALE GENOMIC DNA]</scope>
    <source>
        <strain>13 / Type A</strain>
    </source>
</reference>
<proteinExistence type="inferred from homology"/>